<accession>P42059</accession>
<name>CLAH7_DAVTA</name>
<comment type="subcellular location">
    <subcellularLocation>
        <location evidence="3">Cytoplasm</location>
    </subcellularLocation>
</comment>
<comment type="allergen">
    <text evidence="2">Causes an allergic reaction in human.</text>
</comment>
<comment type="similarity">
    <text evidence="3">Belongs to the WrbA family.</text>
</comment>
<organism>
    <name type="scientific">Davidiella tassiana</name>
    <name type="common">Mycosphaerella tassiana</name>
    <name type="synonym">Cladosporium herbarum</name>
    <dbReference type="NCBI Taxonomy" id="29918"/>
    <lineage>
        <taxon>Eukaryota</taxon>
        <taxon>Fungi</taxon>
        <taxon>Dikarya</taxon>
        <taxon>Ascomycota</taxon>
        <taxon>Pezizomycotina</taxon>
        <taxon>Dothideomycetes</taxon>
        <taxon>Dothideomycetidae</taxon>
        <taxon>Cladosporiales</taxon>
        <taxon>Cladosporiaceae</taxon>
        <taxon>Cladosporium</taxon>
    </lineage>
</organism>
<protein>
    <recommendedName>
        <fullName>Minor allergen Cla h 7</fullName>
    </recommendedName>
    <alternativeName>
        <fullName>Allergen Cla h 5</fullName>
    </alternativeName>
    <alternativeName>
        <fullName>Allergen Cla h V</fullName>
    </alternativeName>
    <allergenName>Cla h 7</allergenName>
</protein>
<proteinExistence type="evidence at protein level"/>
<gene>
    <name type="primary">CLAH7</name>
    <name type="synonym">CLAH5</name>
</gene>
<feature type="chain" id="PRO_0000200765" description="Minor allergen Cla h 7">
    <location>
        <begin position="1"/>
        <end position="204"/>
    </location>
</feature>
<feature type="domain" description="Flavodoxin-like" evidence="1">
    <location>
        <begin position="5"/>
        <end position="195"/>
    </location>
</feature>
<keyword id="KW-0020">Allergen</keyword>
<keyword id="KW-0963">Cytoplasm</keyword>
<sequence length="204" mass="22355">MAPKIAIIFYSTWGHVQTLAEAEAKGIREAGGSVDLYRVPETLTQEVLTKMHAPPKDDSIPEITDPFILEQYDRFPHGHPTRYGNFPAQWRTFWDRTGGQWQTGAFWGKYAGLFISTGTQGGGQESTALAAMSTLSHHGIIYVPLGYKTTFHLLGDNSEVRGAAVWGAGTFSGGDGSRQPSQKELELTAQGKAFYEAVAKVNFQ</sequence>
<dbReference type="EMBL" id="X78224">
    <property type="protein sequence ID" value="CAA55068.1"/>
    <property type="molecule type" value="mRNA"/>
</dbReference>
<dbReference type="PIR" id="S43116">
    <property type="entry name" value="S43116"/>
</dbReference>
<dbReference type="SMR" id="P42059"/>
<dbReference type="Allergome" id="220">
    <property type="allergen name" value="Cla h 7"/>
</dbReference>
<dbReference type="Allergome" id="3206">
    <property type="allergen name" value="Cla h 7.0101"/>
</dbReference>
<dbReference type="CAZy" id="AA6">
    <property type="family name" value="Auxiliary Activities 6"/>
</dbReference>
<dbReference type="GO" id="GO:0005737">
    <property type="term" value="C:cytoplasm"/>
    <property type="evidence" value="ECO:0007669"/>
    <property type="project" value="UniProtKB-SubCell"/>
</dbReference>
<dbReference type="GO" id="GO:0016020">
    <property type="term" value="C:membrane"/>
    <property type="evidence" value="ECO:0007669"/>
    <property type="project" value="TreeGrafter"/>
</dbReference>
<dbReference type="GO" id="GO:0010181">
    <property type="term" value="F:FMN binding"/>
    <property type="evidence" value="ECO:0007669"/>
    <property type="project" value="InterPro"/>
</dbReference>
<dbReference type="GO" id="GO:0003955">
    <property type="term" value="F:NAD(P)H dehydrogenase (quinone) activity"/>
    <property type="evidence" value="ECO:0007669"/>
    <property type="project" value="InterPro"/>
</dbReference>
<dbReference type="FunFam" id="3.40.50.360:FF:000001">
    <property type="entry name" value="NAD(P)H dehydrogenase (Quinone) FQR1-like"/>
    <property type="match status" value="1"/>
</dbReference>
<dbReference type="Gene3D" id="3.40.50.360">
    <property type="match status" value="1"/>
</dbReference>
<dbReference type="InterPro" id="IPR008254">
    <property type="entry name" value="Flavodoxin/NO_synth"/>
</dbReference>
<dbReference type="InterPro" id="IPR029039">
    <property type="entry name" value="Flavoprotein-like_sf"/>
</dbReference>
<dbReference type="InterPro" id="IPR010089">
    <property type="entry name" value="Flavoprotein_WrbA-like"/>
</dbReference>
<dbReference type="NCBIfam" id="TIGR01755">
    <property type="entry name" value="flav_wrbA"/>
    <property type="match status" value="1"/>
</dbReference>
<dbReference type="NCBIfam" id="NF002999">
    <property type="entry name" value="PRK03767.1"/>
    <property type="match status" value="1"/>
</dbReference>
<dbReference type="PANTHER" id="PTHR30546">
    <property type="entry name" value="FLAVODOXIN-RELATED PROTEIN WRBA-RELATED"/>
    <property type="match status" value="1"/>
</dbReference>
<dbReference type="PANTHER" id="PTHR30546:SF23">
    <property type="entry name" value="FLAVOPROTEIN-LIKE PROTEIN YCP4-RELATED"/>
    <property type="match status" value="1"/>
</dbReference>
<dbReference type="Pfam" id="PF00258">
    <property type="entry name" value="Flavodoxin_1"/>
    <property type="match status" value="1"/>
</dbReference>
<dbReference type="SUPFAM" id="SSF52218">
    <property type="entry name" value="Flavoproteins"/>
    <property type="match status" value="1"/>
</dbReference>
<dbReference type="PROSITE" id="PS50902">
    <property type="entry name" value="FLAVODOXIN_LIKE"/>
    <property type="match status" value="1"/>
</dbReference>
<evidence type="ECO:0000255" key="1">
    <source>
        <dbReference type="PROSITE-ProRule" id="PRU00088"/>
    </source>
</evidence>
<evidence type="ECO:0000269" key="2">
    <source>
    </source>
</evidence>
<evidence type="ECO:0000305" key="3"/>
<reference key="1">
    <citation type="journal article" date="1995" name="Mol. Immunol.">
        <title>Molecular cloning of major and minor allergens of Alternaria alternata and Cladosporium herbarum.</title>
        <authorList>
            <person name="Achatz G."/>
            <person name="Oberkofler H."/>
            <person name="Lechenauer E."/>
            <person name="Simon-Nobbe B."/>
            <person name="Unger A."/>
            <person name="Kandler D."/>
            <person name="Ebner C."/>
            <person name="Prillinger H."/>
            <person name="Kraft D."/>
            <person name="Breitenbach M."/>
        </authorList>
    </citation>
    <scope>NUCLEOTIDE SEQUENCE [MRNA]</scope>
    <scope>ALLERGEN</scope>
    <source>
        <strain>280202-Berlin</strain>
    </source>
</reference>